<organism>
    <name type="scientific">Schizosaccharomyces pombe (strain 972 / ATCC 24843)</name>
    <name type="common">Fission yeast</name>
    <dbReference type="NCBI Taxonomy" id="284812"/>
    <lineage>
        <taxon>Eukaryota</taxon>
        <taxon>Fungi</taxon>
        <taxon>Dikarya</taxon>
        <taxon>Ascomycota</taxon>
        <taxon>Taphrinomycotina</taxon>
        <taxon>Schizosaccharomycetes</taxon>
        <taxon>Schizosaccharomycetales</taxon>
        <taxon>Schizosaccharomycetaceae</taxon>
        <taxon>Schizosaccharomyces</taxon>
    </lineage>
</organism>
<comment type="subcellular location">
    <subcellularLocation>
        <location evidence="2">Membrane</location>
        <topology evidence="2">Multi-pass membrane protein</topology>
    </subcellularLocation>
</comment>
<comment type="similarity">
    <text evidence="2">Belongs to the major facilitator superfamily.</text>
</comment>
<gene>
    <name type="ORF">SPCC1529.01</name>
    <name type="ORF">SPCC794.14</name>
</gene>
<protein>
    <recommendedName>
        <fullName>Uncharacterized transporter C1529.01</fullName>
    </recommendedName>
</protein>
<proteinExistence type="inferred from homology"/>
<sequence length="491" mass="54873">MDLEKKPQDKVETAEIDVKEDPFLVTWQSPTDPKNPKNWIYARKWTQLILVSAFALLGPMASSMVAPCLDQIADRFHIQNSTEKALILSIYLLVFAISPMISAPLSEVFGRRMLLQVGNVIFIVFNMACGLARTKAQMYIFRFLAGFGSATPMGLGSGTISDLFTPDERGKAVAVMSLAPLLGPTIGPVVSGFIAEYTTYKWIFWSTTIFSGFIFALSLPLLAETYPKTLLGEKARKLNKSEKTNKYHTEWNLEHIPRLKLVTPALMRPIRMLFTQPIVILCSTYMAIQYGILYLVLTTYPTLWTEEYHERPSIAGLNYIASGIGLIFGSQASGIFIDKTFRYLKRRNNGKMAPEFRVPVILLGTFFFPAGLFIYGWTAQYHTHWIGPDIGAAMFNIGLMLGWRGIQTYLIDSFMIYAASSTAVACCVRSIAAFAFPLFGQDMYDTLGYGWGNSLLAFIVLGSSIITCSLLWFGGKRLRALSSMVIFKDDV</sequence>
<feature type="chain" id="PRO_0000173446" description="Uncharacterized transporter C1529.01">
    <location>
        <begin position="1"/>
        <end position="491"/>
    </location>
</feature>
<feature type="transmembrane region" description="Helical" evidence="1">
    <location>
        <begin position="48"/>
        <end position="68"/>
    </location>
</feature>
<feature type="transmembrane region" description="Helical" evidence="1">
    <location>
        <begin position="85"/>
        <end position="105"/>
    </location>
</feature>
<feature type="transmembrane region" description="Helical" evidence="1">
    <location>
        <begin position="112"/>
        <end position="132"/>
    </location>
</feature>
<feature type="transmembrane region" description="Helical" evidence="1">
    <location>
        <begin position="140"/>
        <end position="160"/>
    </location>
</feature>
<feature type="transmembrane region" description="Helical" evidence="1">
    <location>
        <begin position="174"/>
        <end position="194"/>
    </location>
</feature>
<feature type="transmembrane region" description="Helical" evidence="1">
    <location>
        <begin position="202"/>
        <end position="222"/>
    </location>
</feature>
<feature type="transmembrane region" description="Helical" evidence="1">
    <location>
        <begin position="277"/>
        <end position="297"/>
    </location>
</feature>
<feature type="transmembrane region" description="Helical" evidence="1">
    <location>
        <begin position="317"/>
        <end position="337"/>
    </location>
</feature>
<feature type="transmembrane region" description="Helical" evidence="1">
    <location>
        <begin position="358"/>
        <end position="378"/>
    </location>
</feature>
<feature type="transmembrane region" description="Helical" evidence="1">
    <location>
        <begin position="383"/>
        <end position="403"/>
    </location>
</feature>
<feature type="transmembrane region" description="Helical" evidence="1">
    <location>
        <begin position="408"/>
        <end position="428"/>
    </location>
</feature>
<feature type="transmembrane region" description="Helical" evidence="1">
    <location>
        <begin position="455"/>
        <end position="475"/>
    </location>
</feature>
<name>YJA1_SCHPO</name>
<accession>Q9USN4</accession>
<accession>Q9USI2</accession>
<keyword id="KW-0472">Membrane</keyword>
<keyword id="KW-1185">Reference proteome</keyword>
<keyword id="KW-0812">Transmembrane</keyword>
<keyword id="KW-1133">Transmembrane helix</keyword>
<keyword id="KW-0813">Transport</keyword>
<dbReference type="EMBL" id="CU329672">
    <property type="protein sequence ID" value="CAB59612.2"/>
    <property type="molecule type" value="Genomic_DNA"/>
</dbReference>
<dbReference type="PIR" id="T41018">
    <property type="entry name" value="T41018"/>
</dbReference>
<dbReference type="RefSeq" id="NP_587748.2">
    <property type="nucleotide sequence ID" value="NM_001022742.4"/>
</dbReference>
<dbReference type="BioGRID" id="275791">
    <property type="interactions" value="1"/>
</dbReference>
<dbReference type="FunCoup" id="Q9USN4">
    <property type="interactions" value="11"/>
</dbReference>
<dbReference type="iPTMnet" id="Q9USN4"/>
<dbReference type="PaxDb" id="4896-SPCC1529.01.1"/>
<dbReference type="EnsemblFungi" id="SPCC1529.01.1">
    <property type="protein sequence ID" value="SPCC1529.01.1:pep"/>
    <property type="gene ID" value="SPCC1529.01"/>
</dbReference>
<dbReference type="KEGG" id="spo:2539221"/>
<dbReference type="PomBase" id="SPCC1529.01"/>
<dbReference type="VEuPathDB" id="FungiDB:SPCC1529.01"/>
<dbReference type="eggNOG" id="KOG0255">
    <property type="taxonomic scope" value="Eukaryota"/>
</dbReference>
<dbReference type="HOGENOM" id="CLU_008455_1_3_1"/>
<dbReference type="InParanoid" id="Q9USN4"/>
<dbReference type="OMA" id="FQGMQTY"/>
<dbReference type="PhylomeDB" id="Q9USN4"/>
<dbReference type="PRO" id="PR:Q9USN4"/>
<dbReference type="Proteomes" id="UP000002485">
    <property type="component" value="Chromosome III"/>
</dbReference>
<dbReference type="GO" id="GO:0005783">
    <property type="term" value="C:endoplasmic reticulum"/>
    <property type="evidence" value="ECO:0007005"/>
    <property type="project" value="PomBase"/>
</dbReference>
<dbReference type="GO" id="GO:0005886">
    <property type="term" value="C:plasma membrane"/>
    <property type="evidence" value="ECO:0000318"/>
    <property type="project" value="GO_Central"/>
</dbReference>
<dbReference type="GO" id="GO:0022857">
    <property type="term" value="F:transmembrane transporter activity"/>
    <property type="evidence" value="ECO:0000318"/>
    <property type="project" value="GO_Central"/>
</dbReference>
<dbReference type="GO" id="GO:0140115">
    <property type="term" value="P:export across plasma membrane"/>
    <property type="evidence" value="ECO:0007669"/>
    <property type="project" value="UniProtKB-ARBA"/>
</dbReference>
<dbReference type="GO" id="GO:0055085">
    <property type="term" value="P:transmembrane transport"/>
    <property type="evidence" value="ECO:0000318"/>
    <property type="project" value="GO_Central"/>
</dbReference>
<dbReference type="GO" id="GO:0042908">
    <property type="term" value="P:xenobiotic transport"/>
    <property type="evidence" value="ECO:0007669"/>
    <property type="project" value="UniProtKB-ARBA"/>
</dbReference>
<dbReference type="CDD" id="cd17323">
    <property type="entry name" value="MFS_Tpo1_MDR_like"/>
    <property type="match status" value="1"/>
</dbReference>
<dbReference type="FunFam" id="1.20.1250.20:FF:000011">
    <property type="entry name" value="MFS multidrug transporter, putative"/>
    <property type="match status" value="1"/>
</dbReference>
<dbReference type="Gene3D" id="1.20.1250.20">
    <property type="entry name" value="MFS general substrate transporter like domains"/>
    <property type="match status" value="1"/>
</dbReference>
<dbReference type="InterPro" id="IPR011701">
    <property type="entry name" value="MFS"/>
</dbReference>
<dbReference type="InterPro" id="IPR020846">
    <property type="entry name" value="MFS_dom"/>
</dbReference>
<dbReference type="InterPro" id="IPR036259">
    <property type="entry name" value="MFS_trans_sf"/>
</dbReference>
<dbReference type="InterPro" id="IPR005829">
    <property type="entry name" value="Sugar_transporter_CS"/>
</dbReference>
<dbReference type="PANTHER" id="PTHR23502">
    <property type="entry name" value="MAJOR FACILITATOR SUPERFAMILY"/>
    <property type="match status" value="1"/>
</dbReference>
<dbReference type="PANTHER" id="PTHR23502:SF60">
    <property type="entry name" value="MAJOR FACILITATOR SUPERFAMILY (MFS) PROFILE DOMAIN-CONTAINING PROTEIN-RELATED"/>
    <property type="match status" value="1"/>
</dbReference>
<dbReference type="Pfam" id="PF07690">
    <property type="entry name" value="MFS_1"/>
    <property type="match status" value="1"/>
</dbReference>
<dbReference type="SUPFAM" id="SSF103473">
    <property type="entry name" value="MFS general substrate transporter"/>
    <property type="match status" value="1"/>
</dbReference>
<dbReference type="PROSITE" id="PS50850">
    <property type="entry name" value="MFS"/>
    <property type="match status" value="1"/>
</dbReference>
<dbReference type="PROSITE" id="PS00216">
    <property type="entry name" value="SUGAR_TRANSPORT_1"/>
    <property type="match status" value="1"/>
</dbReference>
<reference key="1">
    <citation type="journal article" date="2002" name="Nature">
        <title>The genome sequence of Schizosaccharomyces pombe.</title>
        <authorList>
            <person name="Wood V."/>
            <person name="Gwilliam R."/>
            <person name="Rajandream M.A."/>
            <person name="Lyne M.H."/>
            <person name="Lyne R."/>
            <person name="Stewart A."/>
            <person name="Sgouros J.G."/>
            <person name="Peat N."/>
            <person name="Hayles J."/>
            <person name="Baker S.G."/>
            <person name="Basham D."/>
            <person name="Bowman S."/>
            <person name="Brooks K."/>
            <person name="Brown D."/>
            <person name="Brown S."/>
            <person name="Chillingworth T."/>
            <person name="Churcher C.M."/>
            <person name="Collins M."/>
            <person name="Connor R."/>
            <person name="Cronin A."/>
            <person name="Davis P."/>
            <person name="Feltwell T."/>
            <person name="Fraser A."/>
            <person name="Gentles S."/>
            <person name="Goble A."/>
            <person name="Hamlin N."/>
            <person name="Harris D.E."/>
            <person name="Hidalgo J."/>
            <person name="Hodgson G."/>
            <person name="Holroyd S."/>
            <person name="Hornsby T."/>
            <person name="Howarth S."/>
            <person name="Huckle E.J."/>
            <person name="Hunt S."/>
            <person name="Jagels K."/>
            <person name="James K.D."/>
            <person name="Jones L."/>
            <person name="Jones M."/>
            <person name="Leather S."/>
            <person name="McDonald S."/>
            <person name="McLean J."/>
            <person name="Mooney P."/>
            <person name="Moule S."/>
            <person name="Mungall K.L."/>
            <person name="Murphy L.D."/>
            <person name="Niblett D."/>
            <person name="Odell C."/>
            <person name="Oliver K."/>
            <person name="O'Neil S."/>
            <person name="Pearson D."/>
            <person name="Quail M.A."/>
            <person name="Rabbinowitsch E."/>
            <person name="Rutherford K.M."/>
            <person name="Rutter S."/>
            <person name="Saunders D."/>
            <person name="Seeger K."/>
            <person name="Sharp S."/>
            <person name="Skelton J."/>
            <person name="Simmonds M.N."/>
            <person name="Squares R."/>
            <person name="Squares S."/>
            <person name="Stevens K."/>
            <person name="Taylor K."/>
            <person name="Taylor R.G."/>
            <person name="Tivey A."/>
            <person name="Walsh S.V."/>
            <person name="Warren T."/>
            <person name="Whitehead S."/>
            <person name="Woodward J.R."/>
            <person name="Volckaert G."/>
            <person name="Aert R."/>
            <person name="Robben J."/>
            <person name="Grymonprez B."/>
            <person name="Weltjens I."/>
            <person name="Vanstreels E."/>
            <person name="Rieger M."/>
            <person name="Schaefer M."/>
            <person name="Mueller-Auer S."/>
            <person name="Gabel C."/>
            <person name="Fuchs M."/>
            <person name="Duesterhoeft A."/>
            <person name="Fritzc C."/>
            <person name="Holzer E."/>
            <person name="Moestl D."/>
            <person name="Hilbert H."/>
            <person name="Borzym K."/>
            <person name="Langer I."/>
            <person name="Beck A."/>
            <person name="Lehrach H."/>
            <person name="Reinhardt R."/>
            <person name="Pohl T.M."/>
            <person name="Eger P."/>
            <person name="Zimmermann W."/>
            <person name="Wedler H."/>
            <person name="Wambutt R."/>
            <person name="Purnelle B."/>
            <person name="Goffeau A."/>
            <person name="Cadieu E."/>
            <person name="Dreano S."/>
            <person name="Gloux S."/>
            <person name="Lelaure V."/>
            <person name="Mottier S."/>
            <person name="Galibert F."/>
            <person name="Aves S.J."/>
            <person name="Xiang Z."/>
            <person name="Hunt C."/>
            <person name="Moore K."/>
            <person name="Hurst S.M."/>
            <person name="Lucas M."/>
            <person name="Rochet M."/>
            <person name="Gaillardin C."/>
            <person name="Tallada V.A."/>
            <person name="Garzon A."/>
            <person name="Thode G."/>
            <person name="Daga R.R."/>
            <person name="Cruzado L."/>
            <person name="Jimenez J."/>
            <person name="Sanchez M."/>
            <person name="del Rey F."/>
            <person name="Benito J."/>
            <person name="Dominguez A."/>
            <person name="Revuelta J.L."/>
            <person name="Moreno S."/>
            <person name="Armstrong J."/>
            <person name="Forsburg S.L."/>
            <person name="Cerutti L."/>
            <person name="Lowe T."/>
            <person name="McCombie W.R."/>
            <person name="Paulsen I."/>
            <person name="Potashkin J."/>
            <person name="Shpakovski G.V."/>
            <person name="Ussery D."/>
            <person name="Barrell B.G."/>
            <person name="Nurse P."/>
        </authorList>
    </citation>
    <scope>NUCLEOTIDE SEQUENCE [LARGE SCALE GENOMIC DNA]</scope>
    <source>
        <strain>972 / ATCC 24843</strain>
    </source>
</reference>
<evidence type="ECO:0000255" key="1"/>
<evidence type="ECO:0000305" key="2"/>